<proteinExistence type="evidence at transcript level"/>
<evidence type="ECO:0000250" key="1">
    <source>
        <dbReference type="UniProtKB" id="Q42524"/>
    </source>
</evidence>
<evidence type="ECO:0000250" key="2">
    <source>
        <dbReference type="UniProtKB" id="Q9SMT7"/>
    </source>
</evidence>
<evidence type="ECO:0000269" key="3">
    <source>
    </source>
</evidence>
<evidence type="ECO:0000303" key="4">
    <source>
    </source>
</evidence>
<evidence type="ECO:0000305" key="5"/>
<accession>A0A2H5AIX5</accession>
<keyword id="KW-0067">ATP-binding</keyword>
<keyword id="KW-0436">Ligase</keyword>
<keyword id="KW-0547">Nucleotide-binding</keyword>
<keyword id="KW-0587">Phenylpropanoid metabolism</keyword>
<reference key="1">
    <citation type="journal article" date="2017" name="Sci. Rep.">
        <title>Transcriptome and metabolome profiling of Narcissus pseudonarcissus 'King Alfred' reveal components of Amaryllidaceae alkaloid metabolism.</title>
        <authorList>
            <person name="Singh A."/>
            <person name="Desgagne-Penix I."/>
        </authorList>
    </citation>
    <scope>NUCLEOTIDE SEQUENCE [MRNA]</scope>
    <scope>REVIEW ON THE AMARYLLIDACEAE ALKALOID METABOLISM</scope>
    <scope>PATHWAY</scope>
    <scope>TISSUE SPECIFICITY</scope>
    <scope>GENE FAMILY</scope>
    <scope>NOMENCLATURE</scope>
    <source>
        <strain>cv. King Alfred</strain>
        <tissue>Bulb</tissue>
    </source>
</reference>
<comment type="function">
    <text evidence="1">Produces CoA thioesters of a variety of hydroxy- and methoxy-substituted cinnamic acids, which are used to synthesize several phenylpropanoid-derived compounds, including anthocyanins, flavonoids, isoflavonoids, coumarins, lignin, suberin and wall-bound phenolics.</text>
</comment>
<comment type="catalytic activity">
    <reaction evidence="1">
        <text>(E)-4-coumarate + ATP + CoA = (E)-4-coumaroyl-CoA + AMP + diphosphate</text>
        <dbReference type="Rhea" id="RHEA:19641"/>
        <dbReference type="ChEBI" id="CHEBI:12876"/>
        <dbReference type="ChEBI" id="CHEBI:30616"/>
        <dbReference type="ChEBI" id="CHEBI:33019"/>
        <dbReference type="ChEBI" id="CHEBI:57287"/>
        <dbReference type="ChEBI" id="CHEBI:85008"/>
        <dbReference type="ChEBI" id="CHEBI:456215"/>
        <dbReference type="EC" id="6.2.1.12"/>
    </reaction>
    <physiologicalReaction direction="left-to-right" evidence="1">
        <dbReference type="Rhea" id="RHEA:19642"/>
    </physiologicalReaction>
</comment>
<comment type="pathway">
    <text evidence="1">Phytoalexin biosynthesis; 3,4',5-trihydroxystilbene biosynthesis; 3,4',5-trihydroxystilbene from trans-4-coumarate: step 1/2.</text>
</comment>
<comment type="tissue specificity">
    <text evidence="3">Mostly expressed in stems, and, to a lower extent, in bulbs.</text>
</comment>
<comment type="domain">
    <text evidence="1">Both substrate-binding domains (SBD1 and SBD2) are involved in the substrate recognition, and are sufficient to confer the substrate specificity.</text>
</comment>
<comment type="similarity">
    <text evidence="5">Belongs to the ATP-dependent AMP-binding enzyme family.</text>
</comment>
<protein>
    <recommendedName>
        <fullName evidence="4">4-coumarate-CoA ligase 1</fullName>
        <ecNumber evidence="1">6.2.1.12</ecNumber>
    </recommendedName>
</protein>
<sequence>MGSIPSEKETIFRSKLPDIYVPDHLPLHSYCFQNLHQFSDRPCLIDGFTNKTLTYAEVELASKRVGAGLHRLGLRQGHVVMLLLPNSIEFVLSFIGASLLGAMSTTANPFYTSAEIHKQAAAAGAKIIVTESCHVSKLQGLEGISRIVVIDDAVRVPENVMHFSELESTDEAELPRIDVHPDDVVALPYSSGTTGLPKGVMLTHNGLVTSVAQQVDGENPNLHFSEDDVLLCVLPLFHIYSLNSVLLCGLRAGAAIVLMRKFEIVRLMELVEKYRVTIAPFVPPIVVEMVKNEAVDRYDLSSIRVVMSGAAPMGKELENKLREKLPNAKLGQGYGMTEAGPVLSMCLAFAKEPFEVKSGSCGTVVRNAELKIIDPETGFSLSRNQPGEICIRGNQIMKGYLNNPEATKQTIDEEGWLHTGDIGFVDDDDEIFIVDRLKELIKYKGFQVAPAELEAMLITHPNMADAAVVSIKDDSCGELPVAFIVRSNGSEITEDEIKKYISKQVVFYKRIHRVFFIEAIPKAPSGKILRKELRARLAAECPNGRQL</sequence>
<feature type="chain" id="PRO_0000450635" description="4-coumarate-CoA ligase 1">
    <location>
        <begin position="1"/>
        <end position="547"/>
    </location>
</feature>
<feature type="region of interest" description="SBD1" evidence="1">
    <location>
        <begin position="263"/>
        <end position="332"/>
    </location>
</feature>
<feature type="region of interest" description="SBD2" evidence="1">
    <location>
        <begin position="333"/>
        <end position="400"/>
    </location>
</feature>
<feature type="binding site" evidence="2">
    <location>
        <begin position="190"/>
        <end position="194"/>
    </location>
    <ligand>
        <name>ATP</name>
        <dbReference type="ChEBI" id="CHEBI:30616"/>
    </ligand>
</feature>
<feature type="binding site" evidence="2">
    <location>
        <position position="238"/>
    </location>
    <ligand>
        <name>ATP</name>
        <dbReference type="ChEBI" id="CHEBI:30616"/>
    </ligand>
</feature>
<feature type="binding site" evidence="2">
    <location>
        <begin position="310"/>
        <end position="312"/>
    </location>
    <ligand>
        <name>ATP</name>
        <dbReference type="ChEBI" id="CHEBI:30616"/>
    </ligand>
</feature>
<feature type="binding site" evidence="2">
    <location>
        <begin position="332"/>
        <end position="333"/>
    </location>
    <ligand>
        <name>ATP</name>
        <dbReference type="ChEBI" id="CHEBI:30616"/>
    </ligand>
</feature>
<feature type="binding site" evidence="2">
    <location>
        <position position="337"/>
    </location>
    <ligand>
        <name>ATP</name>
        <dbReference type="ChEBI" id="CHEBI:30616"/>
    </ligand>
</feature>
<feature type="binding site" evidence="2">
    <location>
        <position position="421"/>
    </location>
    <ligand>
        <name>ATP</name>
        <dbReference type="ChEBI" id="CHEBI:30616"/>
    </ligand>
</feature>
<feature type="binding site" evidence="2">
    <location>
        <position position="436"/>
    </location>
    <ligand>
        <name>ATP</name>
        <dbReference type="ChEBI" id="CHEBI:30616"/>
    </ligand>
</feature>
<feature type="binding site" evidence="2">
    <location>
        <position position="527"/>
    </location>
    <ligand>
        <name>ATP</name>
        <dbReference type="ChEBI" id="CHEBI:30616"/>
    </ligand>
</feature>
<dbReference type="EC" id="6.2.1.12" evidence="1"/>
<dbReference type="EMBL" id="MF416093">
    <property type="protein sequence ID" value="AUG71938.1"/>
    <property type="molecule type" value="mRNA"/>
</dbReference>
<dbReference type="SMR" id="A0A2H5AIX5"/>
<dbReference type="UniPathway" id="UPA00372">
    <property type="reaction ID" value="UER00547"/>
</dbReference>
<dbReference type="GO" id="GO:0016207">
    <property type="term" value="F:4-coumarate-CoA ligase activity"/>
    <property type="evidence" value="ECO:0007669"/>
    <property type="project" value="UniProtKB-EC"/>
</dbReference>
<dbReference type="GO" id="GO:0005524">
    <property type="term" value="F:ATP binding"/>
    <property type="evidence" value="ECO:0007669"/>
    <property type="project" value="UniProtKB-KW"/>
</dbReference>
<dbReference type="GO" id="GO:0106290">
    <property type="term" value="F:trans-cinnamate-CoA ligase activity"/>
    <property type="evidence" value="ECO:0007669"/>
    <property type="project" value="UniProtKB-ARBA"/>
</dbReference>
<dbReference type="GO" id="GO:0009698">
    <property type="term" value="P:phenylpropanoid metabolic process"/>
    <property type="evidence" value="ECO:0007669"/>
    <property type="project" value="UniProtKB-KW"/>
</dbReference>
<dbReference type="CDD" id="cd05904">
    <property type="entry name" value="4CL"/>
    <property type="match status" value="1"/>
</dbReference>
<dbReference type="FunFam" id="3.30.300.30:FF:000007">
    <property type="entry name" value="4-coumarate--CoA ligase 2"/>
    <property type="match status" value="1"/>
</dbReference>
<dbReference type="FunFam" id="3.40.50.12780:FF:000003">
    <property type="entry name" value="Long-chain-fatty-acid--CoA ligase FadD"/>
    <property type="match status" value="1"/>
</dbReference>
<dbReference type="Gene3D" id="3.30.300.30">
    <property type="match status" value="1"/>
</dbReference>
<dbReference type="Gene3D" id="3.40.50.12780">
    <property type="entry name" value="N-terminal domain of ligase-like"/>
    <property type="match status" value="1"/>
</dbReference>
<dbReference type="InterPro" id="IPR025110">
    <property type="entry name" value="AMP-bd_C"/>
</dbReference>
<dbReference type="InterPro" id="IPR045851">
    <property type="entry name" value="AMP-bd_C_sf"/>
</dbReference>
<dbReference type="InterPro" id="IPR020845">
    <property type="entry name" value="AMP-binding_CS"/>
</dbReference>
<dbReference type="InterPro" id="IPR000873">
    <property type="entry name" value="AMP-dep_synth/lig_dom"/>
</dbReference>
<dbReference type="InterPro" id="IPR042099">
    <property type="entry name" value="ANL_N_sf"/>
</dbReference>
<dbReference type="PANTHER" id="PTHR24096:SF149">
    <property type="entry name" value="AMP-BINDING DOMAIN-CONTAINING PROTEIN-RELATED"/>
    <property type="match status" value="1"/>
</dbReference>
<dbReference type="PANTHER" id="PTHR24096">
    <property type="entry name" value="LONG-CHAIN-FATTY-ACID--COA LIGASE"/>
    <property type="match status" value="1"/>
</dbReference>
<dbReference type="Pfam" id="PF00501">
    <property type="entry name" value="AMP-binding"/>
    <property type="match status" value="1"/>
</dbReference>
<dbReference type="Pfam" id="PF13193">
    <property type="entry name" value="AMP-binding_C"/>
    <property type="match status" value="1"/>
</dbReference>
<dbReference type="SUPFAM" id="SSF56801">
    <property type="entry name" value="Acetyl-CoA synthetase-like"/>
    <property type="match status" value="1"/>
</dbReference>
<dbReference type="PROSITE" id="PS00455">
    <property type="entry name" value="AMP_BINDING"/>
    <property type="match status" value="1"/>
</dbReference>
<name>4CL1_NARPS</name>
<organism>
    <name type="scientific">Narcissus pseudonarcissus</name>
    <name type="common">Daffodil</name>
    <dbReference type="NCBI Taxonomy" id="39639"/>
    <lineage>
        <taxon>Eukaryota</taxon>
        <taxon>Viridiplantae</taxon>
        <taxon>Streptophyta</taxon>
        <taxon>Embryophyta</taxon>
        <taxon>Tracheophyta</taxon>
        <taxon>Spermatophyta</taxon>
        <taxon>Magnoliopsida</taxon>
        <taxon>Liliopsida</taxon>
        <taxon>Asparagales</taxon>
        <taxon>Amaryllidaceae</taxon>
        <taxon>Amaryllidoideae</taxon>
        <taxon>Narcissus</taxon>
    </lineage>
</organism>
<gene>
    <name evidence="4" type="primary">4CL1</name>
</gene>